<accession>B6JHM4</accession>
<accession>F8BZA3</accession>
<organism>
    <name type="scientific">Afipia carboxidovorans (strain ATCC 49405 / DSM 1227 / KCTC 32145 / OM5)</name>
    <name type="common">Oligotropha carboxidovorans</name>
    <dbReference type="NCBI Taxonomy" id="504832"/>
    <lineage>
        <taxon>Bacteria</taxon>
        <taxon>Pseudomonadati</taxon>
        <taxon>Pseudomonadota</taxon>
        <taxon>Alphaproteobacteria</taxon>
        <taxon>Hyphomicrobiales</taxon>
        <taxon>Nitrobacteraceae</taxon>
        <taxon>Afipia</taxon>
    </lineage>
</organism>
<dbReference type="EC" id="6.3.5.2" evidence="1"/>
<dbReference type="EMBL" id="CP001196">
    <property type="protein sequence ID" value="ACI93580.1"/>
    <property type="molecule type" value="Genomic_DNA"/>
</dbReference>
<dbReference type="EMBL" id="CP002826">
    <property type="protein sequence ID" value="AEI06299.1"/>
    <property type="molecule type" value="Genomic_DNA"/>
</dbReference>
<dbReference type="RefSeq" id="WP_012563606.1">
    <property type="nucleotide sequence ID" value="NC_015684.1"/>
</dbReference>
<dbReference type="SMR" id="B6JHM4"/>
<dbReference type="STRING" id="504832.OCA5_c15850"/>
<dbReference type="MEROPS" id="C26.A07"/>
<dbReference type="KEGG" id="oca:OCAR_6467"/>
<dbReference type="KEGG" id="ocg:OCA5_c15850"/>
<dbReference type="PATRIC" id="fig|504832.7.peg.1688"/>
<dbReference type="eggNOG" id="COG0518">
    <property type="taxonomic scope" value="Bacteria"/>
</dbReference>
<dbReference type="eggNOG" id="COG0519">
    <property type="taxonomic scope" value="Bacteria"/>
</dbReference>
<dbReference type="HOGENOM" id="CLU_014340_0_5_5"/>
<dbReference type="OrthoDB" id="9802219at2"/>
<dbReference type="UniPathway" id="UPA00189">
    <property type="reaction ID" value="UER00296"/>
</dbReference>
<dbReference type="Proteomes" id="UP000007730">
    <property type="component" value="Chromosome"/>
</dbReference>
<dbReference type="GO" id="GO:0005829">
    <property type="term" value="C:cytosol"/>
    <property type="evidence" value="ECO:0007669"/>
    <property type="project" value="TreeGrafter"/>
</dbReference>
<dbReference type="GO" id="GO:0005524">
    <property type="term" value="F:ATP binding"/>
    <property type="evidence" value="ECO:0007669"/>
    <property type="project" value="UniProtKB-UniRule"/>
</dbReference>
<dbReference type="GO" id="GO:0003921">
    <property type="term" value="F:GMP synthase activity"/>
    <property type="evidence" value="ECO:0007669"/>
    <property type="project" value="InterPro"/>
</dbReference>
<dbReference type="CDD" id="cd01742">
    <property type="entry name" value="GATase1_GMP_Synthase"/>
    <property type="match status" value="1"/>
</dbReference>
<dbReference type="CDD" id="cd01997">
    <property type="entry name" value="GMP_synthase_C"/>
    <property type="match status" value="1"/>
</dbReference>
<dbReference type="FunFam" id="3.30.300.10:FF:000002">
    <property type="entry name" value="GMP synthase [glutamine-hydrolyzing]"/>
    <property type="match status" value="1"/>
</dbReference>
<dbReference type="FunFam" id="3.40.50.620:FF:000001">
    <property type="entry name" value="GMP synthase [glutamine-hydrolyzing]"/>
    <property type="match status" value="1"/>
</dbReference>
<dbReference type="FunFam" id="3.40.50.880:FF:000001">
    <property type="entry name" value="GMP synthase [glutamine-hydrolyzing]"/>
    <property type="match status" value="1"/>
</dbReference>
<dbReference type="Gene3D" id="3.30.300.10">
    <property type="match status" value="1"/>
</dbReference>
<dbReference type="Gene3D" id="3.40.50.880">
    <property type="match status" value="1"/>
</dbReference>
<dbReference type="Gene3D" id="3.40.50.620">
    <property type="entry name" value="HUPs"/>
    <property type="match status" value="1"/>
</dbReference>
<dbReference type="HAMAP" id="MF_00344">
    <property type="entry name" value="GMP_synthase"/>
    <property type="match status" value="1"/>
</dbReference>
<dbReference type="InterPro" id="IPR029062">
    <property type="entry name" value="Class_I_gatase-like"/>
</dbReference>
<dbReference type="InterPro" id="IPR017926">
    <property type="entry name" value="GATASE"/>
</dbReference>
<dbReference type="InterPro" id="IPR001674">
    <property type="entry name" value="GMP_synth_C"/>
</dbReference>
<dbReference type="InterPro" id="IPR004739">
    <property type="entry name" value="GMP_synth_GATase"/>
</dbReference>
<dbReference type="InterPro" id="IPR022955">
    <property type="entry name" value="GMP_synthase"/>
</dbReference>
<dbReference type="InterPro" id="IPR025777">
    <property type="entry name" value="GMPS_ATP_PPase_dom"/>
</dbReference>
<dbReference type="InterPro" id="IPR022310">
    <property type="entry name" value="NAD/GMP_synthase"/>
</dbReference>
<dbReference type="InterPro" id="IPR014729">
    <property type="entry name" value="Rossmann-like_a/b/a_fold"/>
</dbReference>
<dbReference type="NCBIfam" id="TIGR00884">
    <property type="entry name" value="guaA_Cterm"/>
    <property type="match status" value="1"/>
</dbReference>
<dbReference type="NCBIfam" id="TIGR00888">
    <property type="entry name" value="guaA_Nterm"/>
    <property type="match status" value="1"/>
</dbReference>
<dbReference type="NCBIfam" id="NF000848">
    <property type="entry name" value="PRK00074.1"/>
    <property type="match status" value="1"/>
</dbReference>
<dbReference type="PANTHER" id="PTHR11922:SF2">
    <property type="entry name" value="GMP SYNTHASE [GLUTAMINE-HYDROLYZING]"/>
    <property type="match status" value="1"/>
</dbReference>
<dbReference type="PANTHER" id="PTHR11922">
    <property type="entry name" value="GMP SYNTHASE-RELATED"/>
    <property type="match status" value="1"/>
</dbReference>
<dbReference type="Pfam" id="PF00117">
    <property type="entry name" value="GATase"/>
    <property type="match status" value="1"/>
</dbReference>
<dbReference type="Pfam" id="PF00958">
    <property type="entry name" value="GMP_synt_C"/>
    <property type="match status" value="1"/>
</dbReference>
<dbReference type="Pfam" id="PF02540">
    <property type="entry name" value="NAD_synthase"/>
    <property type="match status" value="1"/>
</dbReference>
<dbReference type="PRINTS" id="PR00097">
    <property type="entry name" value="ANTSNTHASEII"/>
</dbReference>
<dbReference type="PRINTS" id="PR00096">
    <property type="entry name" value="GATASE"/>
</dbReference>
<dbReference type="SUPFAM" id="SSF52402">
    <property type="entry name" value="Adenine nucleotide alpha hydrolases-like"/>
    <property type="match status" value="1"/>
</dbReference>
<dbReference type="SUPFAM" id="SSF52317">
    <property type="entry name" value="Class I glutamine amidotransferase-like"/>
    <property type="match status" value="1"/>
</dbReference>
<dbReference type="SUPFAM" id="SSF54810">
    <property type="entry name" value="GMP synthetase C-terminal dimerisation domain"/>
    <property type="match status" value="1"/>
</dbReference>
<dbReference type="PROSITE" id="PS51273">
    <property type="entry name" value="GATASE_TYPE_1"/>
    <property type="match status" value="1"/>
</dbReference>
<dbReference type="PROSITE" id="PS51553">
    <property type="entry name" value="GMPS_ATP_PPASE"/>
    <property type="match status" value="1"/>
</dbReference>
<keyword id="KW-0067">ATP-binding</keyword>
<keyword id="KW-0315">Glutamine amidotransferase</keyword>
<keyword id="KW-0332">GMP biosynthesis</keyword>
<keyword id="KW-0436">Ligase</keyword>
<keyword id="KW-0547">Nucleotide-binding</keyword>
<keyword id="KW-0658">Purine biosynthesis</keyword>
<keyword id="KW-1185">Reference proteome</keyword>
<gene>
    <name evidence="1" type="primary">guaA</name>
    <name type="ordered locus">OCAR_6467</name>
    <name type="ordered locus">OCA5_c15850</name>
</gene>
<comment type="function">
    <text evidence="1">Catalyzes the synthesis of GMP from XMP.</text>
</comment>
<comment type="catalytic activity">
    <reaction evidence="1">
        <text>XMP + L-glutamine + ATP + H2O = GMP + L-glutamate + AMP + diphosphate + 2 H(+)</text>
        <dbReference type="Rhea" id="RHEA:11680"/>
        <dbReference type="ChEBI" id="CHEBI:15377"/>
        <dbReference type="ChEBI" id="CHEBI:15378"/>
        <dbReference type="ChEBI" id="CHEBI:29985"/>
        <dbReference type="ChEBI" id="CHEBI:30616"/>
        <dbReference type="ChEBI" id="CHEBI:33019"/>
        <dbReference type="ChEBI" id="CHEBI:57464"/>
        <dbReference type="ChEBI" id="CHEBI:58115"/>
        <dbReference type="ChEBI" id="CHEBI:58359"/>
        <dbReference type="ChEBI" id="CHEBI:456215"/>
        <dbReference type="EC" id="6.3.5.2"/>
    </reaction>
</comment>
<comment type="pathway">
    <text evidence="1">Purine metabolism; GMP biosynthesis; GMP from XMP (L-Gln route): step 1/1.</text>
</comment>
<comment type="subunit">
    <text evidence="1">Homodimer.</text>
</comment>
<reference key="1">
    <citation type="journal article" date="2008" name="J. Bacteriol.">
        <title>Genome sequence of the chemolithoautotrophic bacterium Oligotropha carboxidovorans OM5T.</title>
        <authorList>
            <person name="Paul D."/>
            <person name="Bridges S."/>
            <person name="Burgess S.C."/>
            <person name="Dandass Y."/>
            <person name="Lawrence M.L."/>
        </authorList>
    </citation>
    <scope>NUCLEOTIDE SEQUENCE [LARGE SCALE GENOMIC DNA]</scope>
    <source>
        <strain>ATCC 49405 / DSM 1227 / KCTC 32145 / OM5</strain>
    </source>
</reference>
<reference key="2">
    <citation type="journal article" date="2011" name="J. Bacteriol.">
        <title>Complete genome sequences of the chemolithoautotrophic Oligotropha carboxidovorans strains OM4 and OM5.</title>
        <authorList>
            <person name="Volland S."/>
            <person name="Rachinger M."/>
            <person name="Strittmatter A."/>
            <person name="Daniel R."/>
            <person name="Gottschalk G."/>
            <person name="Meyer O."/>
        </authorList>
    </citation>
    <scope>NUCLEOTIDE SEQUENCE [LARGE SCALE GENOMIC DNA]</scope>
    <source>
        <strain>ATCC 49405 / DSM 1227 / KCTC 32145 / OM5</strain>
    </source>
</reference>
<feature type="chain" id="PRO_1000120348" description="GMP synthase [glutamine-hydrolyzing]">
    <location>
        <begin position="1"/>
        <end position="531"/>
    </location>
</feature>
<feature type="domain" description="Glutamine amidotransferase type-1" evidence="1">
    <location>
        <begin position="20"/>
        <end position="213"/>
    </location>
</feature>
<feature type="domain" description="GMPS ATP-PPase" evidence="1">
    <location>
        <begin position="214"/>
        <end position="406"/>
    </location>
</feature>
<feature type="active site" description="Nucleophile" evidence="1">
    <location>
        <position position="97"/>
    </location>
</feature>
<feature type="active site" evidence="1">
    <location>
        <position position="187"/>
    </location>
</feature>
<feature type="active site" evidence="1">
    <location>
        <position position="189"/>
    </location>
</feature>
<feature type="binding site" evidence="1">
    <location>
        <begin position="241"/>
        <end position="247"/>
    </location>
    <ligand>
        <name>ATP</name>
        <dbReference type="ChEBI" id="CHEBI:30616"/>
    </ligand>
</feature>
<proteinExistence type="inferred from homology"/>
<evidence type="ECO:0000255" key="1">
    <source>
        <dbReference type="HAMAP-Rule" id="MF_00344"/>
    </source>
</evidence>
<protein>
    <recommendedName>
        <fullName evidence="1">GMP synthase [glutamine-hydrolyzing]</fullName>
        <ecNumber evidence="1">6.3.5.2</ecNumber>
    </recommendedName>
    <alternativeName>
        <fullName evidence="1">GMP synthetase</fullName>
    </alternativeName>
    <alternativeName>
        <fullName evidence="1">Glutamine amidotransferase</fullName>
    </alternativeName>
</protein>
<sequence>MTAPRQSTSATPDVAAAHDKILIVDFGSQVTQLIARRVREEGVYSEIVPFQKAEQAFTAMQPKAVILSGGPASVLEAGAPSAPMSIFTAGVPVLGICYGEQTMAQQLGGMVEGGHHREFGRAAIEITDDCALFEGVWKKGEQHDVWMSHGDRVTKLPEGFRGVARAAGSPIAIIADDTRKFYAMQFHPEVVHTPDGAKLIRNFVRKVAGLKGDWTMRAFREEAIEKIRAQVGQGRVICGLSGGVDSAVAAVLIHEAIGDQLTCVFVDHGLLRMAEAETVVSLFRDHYNIPLVHVDASKTFLGELAGVTDPELKRKTIGRLFIDVFDEEAKKIGGADFLAQGTLYPDVIESVSFTGGPSVTIKSHHNVGGLPARMKMKLVEPLRELFKDEVRALGRELGLPDVFVGRHPFPGPGLAIRCPGEITPEKLDILRQADAIYIEEIRRAGLYDTIWQAFAVLLPVKTVGVMGDGRTYEFVVGLRAVTSTDGMTADFYPFDMRFLGETATRIINEVKGVNRVVYDVTSKPPGTIEWE</sequence>
<name>GUAA_AFIC5</name>